<comment type="function">
    <text evidence="1">Produces ATP from ADP in the presence of a proton gradient across the membrane. The alpha chain is a regulatory subunit.</text>
</comment>
<comment type="catalytic activity">
    <reaction evidence="1">
        <text>ATP + H2O + 4 H(+)(in) = ADP + phosphate + 5 H(+)(out)</text>
        <dbReference type="Rhea" id="RHEA:57720"/>
        <dbReference type="ChEBI" id="CHEBI:15377"/>
        <dbReference type="ChEBI" id="CHEBI:15378"/>
        <dbReference type="ChEBI" id="CHEBI:30616"/>
        <dbReference type="ChEBI" id="CHEBI:43474"/>
        <dbReference type="ChEBI" id="CHEBI:456216"/>
        <dbReference type="EC" id="7.1.2.2"/>
    </reaction>
</comment>
<comment type="subunit">
    <text evidence="1">F-type ATPases have 2 components, CF(1) - the catalytic core - and CF(0) - the membrane proton channel. CF(1) has five subunits: alpha(3), beta(3), gamma(1), delta(1), epsilon(1). CF(0) has four main subunits: a, b, b' and c.</text>
</comment>
<comment type="subcellular location">
    <subcellularLocation>
        <location evidence="1">Plastid</location>
        <location evidence="1">Chloroplast thylakoid membrane</location>
        <topology evidence="1">Peripheral membrane protein</topology>
    </subcellularLocation>
</comment>
<comment type="similarity">
    <text evidence="1">Belongs to the ATPase alpha/beta chains family.</text>
</comment>
<gene>
    <name evidence="1" type="primary">atpA</name>
</gene>
<organism>
    <name type="scientific">Hordeum vulgare</name>
    <name type="common">Barley</name>
    <dbReference type="NCBI Taxonomy" id="4513"/>
    <lineage>
        <taxon>Eukaryota</taxon>
        <taxon>Viridiplantae</taxon>
        <taxon>Streptophyta</taxon>
        <taxon>Embryophyta</taxon>
        <taxon>Tracheophyta</taxon>
        <taxon>Spermatophyta</taxon>
        <taxon>Magnoliopsida</taxon>
        <taxon>Liliopsida</taxon>
        <taxon>Poales</taxon>
        <taxon>Poaceae</taxon>
        <taxon>BOP clade</taxon>
        <taxon>Pooideae</taxon>
        <taxon>Triticodae</taxon>
        <taxon>Triticeae</taxon>
        <taxon>Hordeinae</taxon>
        <taxon>Hordeum</taxon>
    </lineage>
</organism>
<proteinExistence type="inferred from homology"/>
<name>ATPA_HORVU</name>
<keyword id="KW-0066">ATP synthesis</keyword>
<keyword id="KW-0067">ATP-binding</keyword>
<keyword id="KW-0139">CF(1)</keyword>
<keyword id="KW-0150">Chloroplast</keyword>
<keyword id="KW-0375">Hydrogen ion transport</keyword>
<keyword id="KW-0406">Ion transport</keyword>
<keyword id="KW-0472">Membrane</keyword>
<keyword id="KW-0547">Nucleotide-binding</keyword>
<keyword id="KW-0934">Plastid</keyword>
<keyword id="KW-0793">Thylakoid</keyword>
<keyword id="KW-1278">Translocase</keyword>
<keyword id="KW-0813">Transport</keyword>
<protein>
    <recommendedName>
        <fullName evidence="1">ATP synthase subunit alpha, chloroplastic</fullName>
        <ecNumber evidence="1">7.1.2.2</ecNumber>
    </recommendedName>
    <alternativeName>
        <fullName evidence="1">ATP synthase F1 sector subunit alpha</fullName>
    </alternativeName>
    <alternativeName>
        <fullName evidence="1">F-ATPase subunit alpha</fullName>
    </alternativeName>
</protein>
<feature type="chain" id="PRO_0000339088" description="ATP synthase subunit alpha, chloroplastic">
    <location>
        <begin position="1"/>
        <end position="504"/>
    </location>
</feature>
<feature type="binding site" evidence="1">
    <location>
        <begin position="170"/>
        <end position="177"/>
    </location>
    <ligand>
        <name>ATP</name>
        <dbReference type="ChEBI" id="CHEBI:30616"/>
    </ligand>
</feature>
<feature type="site" description="Required for activity" evidence="1">
    <location>
        <position position="363"/>
    </location>
</feature>
<sequence>MATLRVDEIHKILRERIEQYNRKVGIENIGRVVQVGDGIARIIGLGEIMSGELVQFAEGTRGIALNLESKNVGIVLMGDGLMIQEGSFVKATGRIAQIPVSEAYLGRVVNALAKPIDGKGEIIASESRLIESPAPSIISRRSVYEPLQTGLIAIDSMIPIGRGQRELIIGDRQTGKTAVATDTILNQKGQGVICVYVAIGQRASSVAQVVTTFHEEGAMEYTIVVAEMADSPATLQYLAPYTGAALAEYFMYRERHTLIIYDDLSKQAQAYRQMSLLLRRPPGREAYPGDVFYLHSRLLERAAKLNSLLGEGSMTALPIVETQSGDVSAYIPTNVISITDGQIFLSADLFNAGIRPAINVGISVSRVGSAAQIKAMKQVAGKSKLELAQFAELQAFAQFASALDKTSQNQLARGRRLRELLKQSQANPLPVEEQIATIYTGTRGYLDSLEIEQVNKFLDELRKHLKDTKPQFQEIISSSKTFTEQAEILLKEAIQEQLERFSLQ</sequence>
<geneLocation type="chloroplast"/>
<evidence type="ECO:0000255" key="1">
    <source>
        <dbReference type="HAMAP-Rule" id="MF_01346"/>
    </source>
</evidence>
<dbReference type="EC" id="7.1.2.2" evidence="1"/>
<dbReference type="EMBL" id="EF115541">
    <property type="protein sequence ID" value="ABK79410.1"/>
    <property type="molecule type" value="Genomic_DNA"/>
</dbReference>
<dbReference type="RefSeq" id="YP_010144422.1">
    <property type="nucleotide sequence ID" value="NC_056985.1"/>
</dbReference>
<dbReference type="RefSeq" id="YP_874650.1">
    <property type="nucleotide sequence ID" value="NC_008590.1"/>
</dbReference>
<dbReference type="SMR" id="A1E9I8"/>
<dbReference type="GeneID" id="4525127"/>
<dbReference type="GeneID" id="67140620"/>
<dbReference type="OMA" id="CEYEPEN"/>
<dbReference type="GO" id="GO:0009535">
    <property type="term" value="C:chloroplast thylakoid membrane"/>
    <property type="evidence" value="ECO:0007669"/>
    <property type="project" value="UniProtKB-SubCell"/>
</dbReference>
<dbReference type="GO" id="GO:0045259">
    <property type="term" value="C:proton-transporting ATP synthase complex"/>
    <property type="evidence" value="ECO:0007669"/>
    <property type="project" value="UniProtKB-KW"/>
</dbReference>
<dbReference type="GO" id="GO:0043531">
    <property type="term" value="F:ADP binding"/>
    <property type="evidence" value="ECO:0007669"/>
    <property type="project" value="TreeGrafter"/>
</dbReference>
<dbReference type="GO" id="GO:0005524">
    <property type="term" value="F:ATP binding"/>
    <property type="evidence" value="ECO:0007669"/>
    <property type="project" value="UniProtKB-UniRule"/>
</dbReference>
<dbReference type="GO" id="GO:0046933">
    <property type="term" value="F:proton-transporting ATP synthase activity, rotational mechanism"/>
    <property type="evidence" value="ECO:0007669"/>
    <property type="project" value="UniProtKB-UniRule"/>
</dbReference>
<dbReference type="CDD" id="cd18113">
    <property type="entry name" value="ATP-synt_F1_alpha_C"/>
    <property type="match status" value="1"/>
</dbReference>
<dbReference type="CDD" id="cd18116">
    <property type="entry name" value="ATP-synt_F1_alpha_N"/>
    <property type="match status" value="1"/>
</dbReference>
<dbReference type="CDD" id="cd01132">
    <property type="entry name" value="F1-ATPase_alpha_CD"/>
    <property type="match status" value="1"/>
</dbReference>
<dbReference type="FunFam" id="1.20.150.20:FF:000001">
    <property type="entry name" value="ATP synthase subunit alpha"/>
    <property type="match status" value="1"/>
</dbReference>
<dbReference type="FunFam" id="2.40.30.20:FF:000001">
    <property type="entry name" value="ATP synthase subunit alpha"/>
    <property type="match status" value="1"/>
</dbReference>
<dbReference type="FunFam" id="3.40.50.300:FF:000002">
    <property type="entry name" value="ATP synthase subunit alpha"/>
    <property type="match status" value="1"/>
</dbReference>
<dbReference type="Gene3D" id="2.40.30.20">
    <property type="match status" value="1"/>
</dbReference>
<dbReference type="Gene3D" id="1.20.150.20">
    <property type="entry name" value="ATP synthase alpha/beta chain, C-terminal domain"/>
    <property type="match status" value="1"/>
</dbReference>
<dbReference type="Gene3D" id="3.40.50.300">
    <property type="entry name" value="P-loop containing nucleotide triphosphate hydrolases"/>
    <property type="match status" value="1"/>
</dbReference>
<dbReference type="HAMAP" id="MF_01346">
    <property type="entry name" value="ATP_synth_alpha_bact"/>
    <property type="match status" value="1"/>
</dbReference>
<dbReference type="InterPro" id="IPR023366">
    <property type="entry name" value="ATP_synth_asu-like_sf"/>
</dbReference>
<dbReference type="InterPro" id="IPR000793">
    <property type="entry name" value="ATP_synth_asu_C"/>
</dbReference>
<dbReference type="InterPro" id="IPR038376">
    <property type="entry name" value="ATP_synth_asu_C_sf"/>
</dbReference>
<dbReference type="InterPro" id="IPR033732">
    <property type="entry name" value="ATP_synth_F1_a_nt-bd_dom"/>
</dbReference>
<dbReference type="InterPro" id="IPR005294">
    <property type="entry name" value="ATP_synth_F1_asu"/>
</dbReference>
<dbReference type="InterPro" id="IPR020003">
    <property type="entry name" value="ATPase_a/bsu_AS"/>
</dbReference>
<dbReference type="InterPro" id="IPR004100">
    <property type="entry name" value="ATPase_F1/V1/A1_a/bsu_N"/>
</dbReference>
<dbReference type="InterPro" id="IPR036121">
    <property type="entry name" value="ATPase_F1/V1/A1_a/bsu_N_sf"/>
</dbReference>
<dbReference type="InterPro" id="IPR000194">
    <property type="entry name" value="ATPase_F1/V1/A1_a/bsu_nucl-bd"/>
</dbReference>
<dbReference type="InterPro" id="IPR027417">
    <property type="entry name" value="P-loop_NTPase"/>
</dbReference>
<dbReference type="NCBIfam" id="TIGR00962">
    <property type="entry name" value="atpA"/>
    <property type="match status" value="1"/>
</dbReference>
<dbReference type="NCBIfam" id="NF009884">
    <property type="entry name" value="PRK13343.1"/>
    <property type="match status" value="1"/>
</dbReference>
<dbReference type="PANTHER" id="PTHR48082:SF6">
    <property type="entry name" value="ATP SYNTHASE SUBUNIT ALPHA, CHLOROPLASTIC"/>
    <property type="match status" value="1"/>
</dbReference>
<dbReference type="PANTHER" id="PTHR48082">
    <property type="entry name" value="ATP SYNTHASE SUBUNIT ALPHA, MITOCHONDRIAL"/>
    <property type="match status" value="1"/>
</dbReference>
<dbReference type="Pfam" id="PF00006">
    <property type="entry name" value="ATP-synt_ab"/>
    <property type="match status" value="1"/>
</dbReference>
<dbReference type="Pfam" id="PF00306">
    <property type="entry name" value="ATP-synt_ab_C"/>
    <property type="match status" value="1"/>
</dbReference>
<dbReference type="Pfam" id="PF02874">
    <property type="entry name" value="ATP-synt_ab_N"/>
    <property type="match status" value="1"/>
</dbReference>
<dbReference type="SUPFAM" id="SSF47917">
    <property type="entry name" value="C-terminal domain of alpha and beta subunits of F1 ATP synthase"/>
    <property type="match status" value="1"/>
</dbReference>
<dbReference type="SUPFAM" id="SSF50615">
    <property type="entry name" value="N-terminal domain of alpha and beta subunits of F1 ATP synthase"/>
    <property type="match status" value="1"/>
</dbReference>
<dbReference type="SUPFAM" id="SSF52540">
    <property type="entry name" value="P-loop containing nucleoside triphosphate hydrolases"/>
    <property type="match status" value="1"/>
</dbReference>
<dbReference type="PROSITE" id="PS00152">
    <property type="entry name" value="ATPASE_ALPHA_BETA"/>
    <property type="match status" value="1"/>
</dbReference>
<accession>A1E9I8</accession>
<reference key="1">
    <citation type="journal article" date="2007" name="Theor. Appl. Genet.">
        <title>Complete chloroplast genome sequences of Hordeum vulgare, Sorghum bicolor and Agrostis stolonifera, and comparative analyses with other grass genomes.</title>
        <authorList>
            <person name="Saski C."/>
            <person name="Lee S.-B."/>
            <person name="Fjellheim S."/>
            <person name="Guda C."/>
            <person name="Jansen R.K."/>
            <person name="Luo H."/>
            <person name="Tomkins J."/>
            <person name="Rognli O.A."/>
            <person name="Daniell H."/>
            <person name="Clarke J.L."/>
        </authorList>
    </citation>
    <scope>NUCLEOTIDE SEQUENCE [LARGE SCALE GENOMIC DNA]</scope>
    <source>
        <strain>cv. Morex</strain>
    </source>
</reference>